<gene>
    <name evidence="1" type="primary">hemE</name>
    <name type="ordered locus">PSPPH_0404</name>
</gene>
<name>DCUP_PSE14</name>
<organism>
    <name type="scientific">Pseudomonas savastanoi pv. phaseolicola (strain 1448A / Race 6)</name>
    <name type="common">Pseudomonas syringae pv. phaseolicola (strain 1448A / Race 6)</name>
    <dbReference type="NCBI Taxonomy" id="264730"/>
    <lineage>
        <taxon>Bacteria</taxon>
        <taxon>Pseudomonadati</taxon>
        <taxon>Pseudomonadota</taxon>
        <taxon>Gammaproteobacteria</taxon>
        <taxon>Pseudomonadales</taxon>
        <taxon>Pseudomonadaceae</taxon>
        <taxon>Pseudomonas</taxon>
    </lineage>
</organism>
<sequence length="354" mass="38691">MTALKNDRFLRALLKQPVDVTPVWMMRQAGRYLPEYRASRASAGDFMSLCKNPQFACEVTLQPLDRYPLDAAILFSDILTIPDAMGLGLYFETGEGPRFKKTVSTLADIEALPIPDAQKDLGYVMDAVSTIRRELNGRVPLIGFAGSPWTLATYMVEGGSSKDFRKSKAMLYDNPQAMHLLLDKLAQSVTAYLNGQILAGAQAVQIFDSWGGSLSSAAYQEFSLAYMRKIVNGLIREHDGRKVPVIVFTKGGGLWLESIADIGADTLGLDWTCDIGEARQRVGSKVSLQGNMDPTVLYARPEAIRQEVARILASYGSGTGHVFNLGHGITPEVDPANAGAFINAIHELSAQYHQ</sequence>
<comment type="function">
    <text evidence="1">Catalyzes the decarboxylation of four acetate groups of uroporphyrinogen-III to yield coproporphyrinogen-III.</text>
</comment>
<comment type="catalytic activity">
    <reaction evidence="1">
        <text>uroporphyrinogen III + 4 H(+) = coproporphyrinogen III + 4 CO2</text>
        <dbReference type="Rhea" id="RHEA:19865"/>
        <dbReference type="ChEBI" id="CHEBI:15378"/>
        <dbReference type="ChEBI" id="CHEBI:16526"/>
        <dbReference type="ChEBI" id="CHEBI:57308"/>
        <dbReference type="ChEBI" id="CHEBI:57309"/>
        <dbReference type="EC" id="4.1.1.37"/>
    </reaction>
</comment>
<comment type="pathway">
    <text evidence="1">Porphyrin-containing compound metabolism; protoporphyrin-IX biosynthesis; coproporphyrinogen-III from 5-aminolevulinate: step 4/4.</text>
</comment>
<comment type="subunit">
    <text evidence="1">Homodimer.</text>
</comment>
<comment type="subcellular location">
    <subcellularLocation>
        <location evidence="1">Cytoplasm</location>
    </subcellularLocation>
</comment>
<comment type="similarity">
    <text evidence="1">Belongs to the uroporphyrinogen decarboxylase family.</text>
</comment>
<dbReference type="EC" id="4.1.1.37" evidence="1"/>
<dbReference type="EMBL" id="CP000058">
    <property type="protein sequence ID" value="AAZ33525.1"/>
    <property type="molecule type" value="Genomic_DNA"/>
</dbReference>
<dbReference type="RefSeq" id="WP_011167469.1">
    <property type="nucleotide sequence ID" value="NC_005773.3"/>
</dbReference>
<dbReference type="SMR" id="Q48PG2"/>
<dbReference type="KEGG" id="psp:PSPPH_0404"/>
<dbReference type="eggNOG" id="COG0407">
    <property type="taxonomic scope" value="Bacteria"/>
</dbReference>
<dbReference type="HOGENOM" id="CLU_040933_0_0_6"/>
<dbReference type="UniPathway" id="UPA00251">
    <property type="reaction ID" value="UER00321"/>
</dbReference>
<dbReference type="Proteomes" id="UP000000551">
    <property type="component" value="Chromosome"/>
</dbReference>
<dbReference type="GO" id="GO:0005829">
    <property type="term" value="C:cytosol"/>
    <property type="evidence" value="ECO:0007669"/>
    <property type="project" value="TreeGrafter"/>
</dbReference>
<dbReference type="GO" id="GO:0004853">
    <property type="term" value="F:uroporphyrinogen decarboxylase activity"/>
    <property type="evidence" value="ECO:0007669"/>
    <property type="project" value="UniProtKB-UniRule"/>
</dbReference>
<dbReference type="GO" id="GO:0019353">
    <property type="term" value="P:protoporphyrinogen IX biosynthetic process from glutamate"/>
    <property type="evidence" value="ECO:0007669"/>
    <property type="project" value="TreeGrafter"/>
</dbReference>
<dbReference type="CDD" id="cd00717">
    <property type="entry name" value="URO-D"/>
    <property type="match status" value="1"/>
</dbReference>
<dbReference type="FunFam" id="3.20.20.210:FF:000001">
    <property type="entry name" value="Uroporphyrinogen decarboxylase"/>
    <property type="match status" value="1"/>
</dbReference>
<dbReference type="Gene3D" id="3.20.20.210">
    <property type="match status" value="1"/>
</dbReference>
<dbReference type="HAMAP" id="MF_00218">
    <property type="entry name" value="URO_D"/>
    <property type="match status" value="1"/>
</dbReference>
<dbReference type="InterPro" id="IPR038071">
    <property type="entry name" value="UROD/MetE-like_sf"/>
</dbReference>
<dbReference type="InterPro" id="IPR006361">
    <property type="entry name" value="Uroporphyrinogen_deCO2ase_HemE"/>
</dbReference>
<dbReference type="InterPro" id="IPR000257">
    <property type="entry name" value="Uroporphyrinogen_deCOase"/>
</dbReference>
<dbReference type="NCBIfam" id="TIGR01464">
    <property type="entry name" value="hemE"/>
    <property type="match status" value="1"/>
</dbReference>
<dbReference type="PANTHER" id="PTHR21091">
    <property type="entry name" value="METHYLTETRAHYDROFOLATE:HOMOCYSTEINE METHYLTRANSFERASE RELATED"/>
    <property type="match status" value="1"/>
</dbReference>
<dbReference type="PANTHER" id="PTHR21091:SF169">
    <property type="entry name" value="UROPORPHYRINOGEN DECARBOXYLASE"/>
    <property type="match status" value="1"/>
</dbReference>
<dbReference type="Pfam" id="PF01208">
    <property type="entry name" value="URO-D"/>
    <property type="match status" value="1"/>
</dbReference>
<dbReference type="SUPFAM" id="SSF51726">
    <property type="entry name" value="UROD/MetE-like"/>
    <property type="match status" value="1"/>
</dbReference>
<dbReference type="PROSITE" id="PS00906">
    <property type="entry name" value="UROD_1"/>
    <property type="match status" value="1"/>
</dbReference>
<dbReference type="PROSITE" id="PS00907">
    <property type="entry name" value="UROD_2"/>
    <property type="match status" value="1"/>
</dbReference>
<feature type="chain" id="PRO_1000023943" description="Uroporphyrinogen decarboxylase">
    <location>
        <begin position="1"/>
        <end position="354"/>
    </location>
</feature>
<feature type="binding site" evidence="1">
    <location>
        <begin position="27"/>
        <end position="31"/>
    </location>
    <ligand>
        <name>substrate</name>
    </ligand>
</feature>
<feature type="binding site" evidence="1">
    <location>
        <position position="77"/>
    </location>
    <ligand>
        <name>substrate</name>
    </ligand>
</feature>
<feature type="binding site" evidence="1">
    <location>
        <position position="154"/>
    </location>
    <ligand>
        <name>substrate</name>
    </ligand>
</feature>
<feature type="binding site" evidence="1">
    <location>
        <position position="209"/>
    </location>
    <ligand>
        <name>substrate</name>
    </ligand>
</feature>
<feature type="binding site" evidence="1">
    <location>
        <position position="327"/>
    </location>
    <ligand>
        <name>substrate</name>
    </ligand>
</feature>
<feature type="site" description="Transition state stabilizer" evidence="1">
    <location>
        <position position="77"/>
    </location>
</feature>
<accession>Q48PG2</accession>
<evidence type="ECO:0000255" key="1">
    <source>
        <dbReference type="HAMAP-Rule" id="MF_00218"/>
    </source>
</evidence>
<keyword id="KW-0963">Cytoplasm</keyword>
<keyword id="KW-0210">Decarboxylase</keyword>
<keyword id="KW-0456">Lyase</keyword>
<keyword id="KW-0627">Porphyrin biosynthesis</keyword>
<proteinExistence type="inferred from homology"/>
<protein>
    <recommendedName>
        <fullName evidence="1">Uroporphyrinogen decarboxylase</fullName>
        <shortName evidence="1">UPD</shortName>
        <shortName evidence="1">URO-D</shortName>
        <ecNumber evidence="1">4.1.1.37</ecNumber>
    </recommendedName>
</protein>
<reference key="1">
    <citation type="journal article" date="2005" name="J. Bacteriol.">
        <title>Whole-genome sequence analysis of Pseudomonas syringae pv. phaseolicola 1448A reveals divergence among pathovars in genes involved in virulence and transposition.</title>
        <authorList>
            <person name="Joardar V."/>
            <person name="Lindeberg M."/>
            <person name="Jackson R.W."/>
            <person name="Selengut J."/>
            <person name="Dodson R."/>
            <person name="Brinkac L.M."/>
            <person name="Daugherty S.C."/>
            <person name="DeBoy R.T."/>
            <person name="Durkin A.S."/>
            <person name="Gwinn Giglio M."/>
            <person name="Madupu R."/>
            <person name="Nelson W.C."/>
            <person name="Rosovitz M.J."/>
            <person name="Sullivan S.A."/>
            <person name="Crabtree J."/>
            <person name="Creasy T."/>
            <person name="Davidsen T.M."/>
            <person name="Haft D.H."/>
            <person name="Zafar N."/>
            <person name="Zhou L."/>
            <person name="Halpin R."/>
            <person name="Holley T."/>
            <person name="Khouri H.M."/>
            <person name="Feldblyum T.V."/>
            <person name="White O."/>
            <person name="Fraser C.M."/>
            <person name="Chatterjee A.K."/>
            <person name="Cartinhour S."/>
            <person name="Schneider D."/>
            <person name="Mansfield J.W."/>
            <person name="Collmer A."/>
            <person name="Buell R."/>
        </authorList>
    </citation>
    <scope>NUCLEOTIDE SEQUENCE [LARGE SCALE GENOMIC DNA]</scope>
    <source>
        <strain>1448A / Race 6</strain>
    </source>
</reference>